<accession>B9KJ95</accession>
<evidence type="ECO:0000255" key="1">
    <source>
        <dbReference type="HAMAP-Rule" id="MF_00013"/>
    </source>
</evidence>
<evidence type="ECO:0000255" key="2">
    <source>
        <dbReference type="PROSITE-ProRule" id="PRU01067"/>
    </source>
</evidence>
<keyword id="KW-0012">Acyltransferase</keyword>
<keyword id="KW-0963">Cytoplasm</keyword>
<keyword id="KW-1185">Reference proteome</keyword>
<keyword id="KW-0808">Transferase</keyword>
<proteinExistence type="inferred from homology"/>
<sequence>MSLLGFPVEWRVSDGMVDYKAALDFMTSRVDGILEGRESEMVWLLEHPSVYTAGVSAKDGELLSENKFQVVRTTRGGKYSYHGPGQRVVYVMLHLGRRDKRDVRLYVRNLGLWVVGTLAEFGIDSHFDDDNTGVWVQYSRQAKKIAAFGIAIRRWVTYHGFSVNISTDLGCYSGIVPCGIAGSHVTSLQDLGVTVPFEEFDAVLQQKFDTIFLQ</sequence>
<feature type="chain" id="PRO_1000116536" description="Octanoyltransferase">
    <location>
        <begin position="1"/>
        <end position="214"/>
    </location>
</feature>
<feature type="domain" description="BPL/LPL catalytic" evidence="2">
    <location>
        <begin position="36"/>
        <end position="214"/>
    </location>
</feature>
<feature type="active site" description="Acyl-thioester intermediate" evidence="1">
    <location>
        <position position="178"/>
    </location>
</feature>
<feature type="binding site" evidence="1">
    <location>
        <begin position="75"/>
        <end position="82"/>
    </location>
    <ligand>
        <name>substrate</name>
    </ligand>
</feature>
<feature type="binding site" evidence="1">
    <location>
        <begin position="147"/>
        <end position="149"/>
    </location>
    <ligand>
        <name>substrate</name>
    </ligand>
</feature>
<feature type="binding site" evidence="1">
    <location>
        <begin position="160"/>
        <end position="162"/>
    </location>
    <ligand>
        <name>substrate</name>
    </ligand>
</feature>
<feature type="site" description="Lowers pKa of active site Cys" evidence="1">
    <location>
        <position position="144"/>
    </location>
</feature>
<reference key="1">
    <citation type="journal article" date="2009" name="BMC Genomics">
        <title>Conservation in the face of diversity: multistrain analysis of an intracellular bacterium.</title>
        <authorList>
            <person name="Dark M.J."/>
            <person name="Herndon D.R."/>
            <person name="Kappmeyer L.S."/>
            <person name="Gonzales M.P."/>
            <person name="Nordeen E."/>
            <person name="Palmer G.H."/>
            <person name="Knowles D.P. Jr."/>
            <person name="Brayton K.A."/>
        </authorList>
    </citation>
    <scope>NUCLEOTIDE SEQUENCE [LARGE SCALE GENOMIC DNA]</scope>
    <source>
        <strain>Florida</strain>
    </source>
</reference>
<gene>
    <name evidence="1" type="primary">lipB</name>
    <name type="ordered locus">AMF_722</name>
</gene>
<name>LIPB_ANAMF</name>
<protein>
    <recommendedName>
        <fullName evidence="1">Octanoyltransferase</fullName>
        <ecNumber evidence="1">2.3.1.181</ecNumber>
    </recommendedName>
    <alternativeName>
        <fullName evidence="1">Lipoate-protein ligase B</fullName>
    </alternativeName>
    <alternativeName>
        <fullName evidence="1">Lipoyl/octanoyl transferase</fullName>
    </alternativeName>
    <alternativeName>
        <fullName evidence="1">Octanoyl-[acyl-carrier-protein]-protein N-octanoyltransferase</fullName>
    </alternativeName>
</protein>
<dbReference type="EC" id="2.3.1.181" evidence="1"/>
<dbReference type="EMBL" id="CP001079">
    <property type="protein sequence ID" value="ACM49557.1"/>
    <property type="molecule type" value="Genomic_DNA"/>
</dbReference>
<dbReference type="RefSeq" id="WP_010265630.1">
    <property type="nucleotide sequence ID" value="NZ_AFMS01000060.1"/>
</dbReference>
<dbReference type="SMR" id="B9KJ95"/>
<dbReference type="STRING" id="320483.AMF_722"/>
<dbReference type="GeneID" id="7397903"/>
<dbReference type="KEGG" id="amf:AMF_722"/>
<dbReference type="eggNOG" id="COG0321">
    <property type="taxonomic scope" value="Bacteria"/>
</dbReference>
<dbReference type="HOGENOM" id="CLU_035168_3_0_5"/>
<dbReference type="UniPathway" id="UPA00538">
    <property type="reaction ID" value="UER00592"/>
</dbReference>
<dbReference type="Proteomes" id="UP000007307">
    <property type="component" value="Chromosome"/>
</dbReference>
<dbReference type="GO" id="GO:0005737">
    <property type="term" value="C:cytoplasm"/>
    <property type="evidence" value="ECO:0007669"/>
    <property type="project" value="UniProtKB-SubCell"/>
</dbReference>
<dbReference type="GO" id="GO:0033819">
    <property type="term" value="F:lipoyl(octanoyl) transferase activity"/>
    <property type="evidence" value="ECO:0007669"/>
    <property type="project" value="UniProtKB-EC"/>
</dbReference>
<dbReference type="GO" id="GO:0036211">
    <property type="term" value="P:protein modification process"/>
    <property type="evidence" value="ECO:0007669"/>
    <property type="project" value="InterPro"/>
</dbReference>
<dbReference type="CDD" id="cd16444">
    <property type="entry name" value="LipB"/>
    <property type="match status" value="1"/>
</dbReference>
<dbReference type="Gene3D" id="3.30.930.10">
    <property type="entry name" value="Bira Bifunctional Protein, Domain 2"/>
    <property type="match status" value="1"/>
</dbReference>
<dbReference type="HAMAP" id="MF_00013">
    <property type="entry name" value="LipB"/>
    <property type="match status" value="1"/>
</dbReference>
<dbReference type="InterPro" id="IPR045864">
    <property type="entry name" value="aa-tRNA-synth_II/BPL/LPL"/>
</dbReference>
<dbReference type="InterPro" id="IPR004143">
    <property type="entry name" value="BPL_LPL_catalytic"/>
</dbReference>
<dbReference type="InterPro" id="IPR000544">
    <property type="entry name" value="Octanoyltransferase"/>
</dbReference>
<dbReference type="NCBIfam" id="TIGR00214">
    <property type="entry name" value="lipB"/>
    <property type="match status" value="1"/>
</dbReference>
<dbReference type="NCBIfam" id="NF010921">
    <property type="entry name" value="PRK14341.1"/>
    <property type="match status" value="1"/>
</dbReference>
<dbReference type="PANTHER" id="PTHR10993:SF7">
    <property type="entry name" value="LIPOYLTRANSFERASE 2, MITOCHONDRIAL-RELATED"/>
    <property type="match status" value="1"/>
</dbReference>
<dbReference type="PANTHER" id="PTHR10993">
    <property type="entry name" value="OCTANOYLTRANSFERASE"/>
    <property type="match status" value="1"/>
</dbReference>
<dbReference type="Pfam" id="PF21948">
    <property type="entry name" value="LplA-B_cat"/>
    <property type="match status" value="1"/>
</dbReference>
<dbReference type="PIRSF" id="PIRSF016262">
    <property type="entry name" value="LPLase"/>
    <property type="match status" value="1"/>
</dbReference>
<dbReference type="SUPFAM" id="SSF55681">
    <property type="entry name" value="Class II aaRS and biotin synthetases"/>
    <property type="match status" value="1"/>
</dbReference>
<dbReference type="PROSITE" id="PS51733">
    <property type="entry name" value="BPL_LPL_CATALYTIC"/>
    <property type="match status" value="1"/>
</dbReference>
<organism>
    <name type="scientific">Anaplasma marginale (strain Florida)</name>
    <dbReference type="NCBI Taxonomy" id="320483"/>
    <lineage>
        <taxon>Bacteria</taxon>
        <taxon>Pseudomonadati</taxon>
        <taxon>Pseudomonadota</taxon>
        <taxon>Alphaproteobacteria</taxon>
        <taxon>Rickettsiales</taxon>
        <taxon>Anaplasmataceae</taxon>
        <taxon>Anaplasma</taxon>
    </lineage>
</organism>
<comment type="function">
    <text evidence="1">Catalyzes the transfer of endogenously produced octanoic acid from octanoyl-acyl-carrier-protein onto the lipoyl domains of lipoate-dependent enzymes. Lipoyl-ACP can also act as a substrate although octanoyl-ACP is likely to be the physiological substrate.</text>
</comment>
<comment type="catalytic activity">
    <reaction evidence="1">
        <text>octanoyl-[ACP] + L-lysyl-[protein] = N(6)-octanoyl-L-lysyl-[protein] + holo-[ACP] + H(+)</text>
        <dbReference type="Rhea" id="RHEA:17665"/>
        <dbReference type="Rhea" id="RHEA-COMP:9636"/>
        <dbReference type="Rhea" id="RHEA-COMP:9685"/>
        <dbReference type="Rhea" id="RHEA-COMP:9752"/>
        <dbReference type="Rhea" id="RHEA-COMP:9928"/>
        <dbReference type="ChEBI" id="CHEBI:15378"/>
        <dbReference type="ChEBI" id="CHEBI:29969"/>
        <dbReference type="ChEBI" id="CHEBI:64479"/>
        <dbReference type="ChEBI" id="CHEBI:78463"/>
        <dbReference type="ChEBI" id="CHEBI:78809"/>
        <dbReference type="EC" id="2.3.1.181"/>
    </reaction>
</comment>
<comment type="pathway">
    <text evidence="1">Protein modification; protein lipoylation via endogenous pathway; protein N(6)-(lipoyl)lysine from octanoyl-[acyl-carrier-protein]: step 1/2.</text>
</comment>
<comment type="subcellular location">
    <subcellularLocation>
        <location evidence="1">Cytoplasm</location>
    </subcellularLocation>
</comment>
<comment type="miscellaneous">
    <text evidence="1">In the reaction, the free carboxyl group of octanoic acid is attached via an amide linkage to the epsilon-amino group of a specific lysine residue of lipoyl domains of lipoate-dependent enzymes.</text>
</comment>
<comment type="similarity">
    <text evidence="1">Belongs to the LipB family.</text>
</comment>